<organism>
    <name type="scientific">Dictyostelium discoideum</name>
    <name type="common">Social amoeba</name>
    <dbReference type="NCBI Taxonomy" id="44689"/>
    <lineage>
        <taxon>Eukaryota</taxon>
        <taxon>Amoebozoa</taxon>
        <taxon>Evosea</taxon>
        <taxon>Eumycetozoa</taxon>
        <taxon>Dictyostelia</taxon>
        <taxon>Dictyosteliales</taxon>
        <taxon>Dictyosteliaceae</taxon>
        <taxon>Dictyostelium</taxon>
    </lineage>
</organism>
<comment type="function">
    <text evidence="1">Oxygenase that can act as both a histone lysine demethylase and a ribosomal histidine hydroxylase. Specifically demethylates 'Lys-4' (H3K4me) and 'Lys-36' (H3K36me) of histone H3, thereby playing a central role in histone code (By similarity).</text>
</comment>
<comment type="catalytic activity">
    <reaction>
        <text>N(6),N(6)-dimethyl-L-lysyl(36)-[histone H3] + 2 2-oxoglutarate + 2 O2 = L-lysyl(36)-[histone H3] + 2 formaldehyde + 2 succinate + 2 CO2</text>
        <dbReference type="Rhea" id="RHEA:42032"/>
        <dbReference type="Rhea" id="RHEA-COMP:9785"/>
        <dbReference type="Rhea" id="RHEA-COMP:9787"/>
        <dbReference type="ChEBI" id="CHEBI:15379"/>
        <dbReference type="ChEBI" id="CHEBI:16526"/>
        <dbReference type="ChEBI" id="CHEBI:16810"/>
        <dbReference type="ChEBI" id="CHEBI:16842"/>
        <dbReference type="ChEBI" id="CHEBI:29969"/>
        <dbReference type="ChEBI" id="CHEBI:30031"/>
        <dbReference type="ChEBI" id="CHEBI:61976"/>
        <dbReference type="EC" id="1.14.11.27"/>
    </reaction>
</comment>
<comment type="cofactor">
    <cofactor evidence="1">
        <name>Fe(2+)</name>
        <dbReference type="ChEBI" id="CHEBI:29033"/>
    </cofactor>
    <text evidence="1">Binds 1 Fe(2+) ion per subunit.</text>
</comment>
<comment type="subcellular location">
    <subcellularLocation>
        <location evidence="1">Nucleus</location>
    </subcellularLocation>
</comment>
<comment type="similarity">
    <text evidence="4">Belongs to the ROX family. NO66 subfamily.</text>
</comment>
<sequence length="514" mass="58748">MKRGLEEEIEEMSEEEVGVNNNNNGKKKKKKVVKKSKPVPLTKSVPQVSSQPLRPTKLVPKKKTEIREININDIGSNELSVADQRVEADGVLAGLISPTIIEDFYDQYFGQKHLYVKRNGDNIYKNFFTKDSLDKMLRNNLMKFTENVDVTNYVDFQRITLNPEGRAYPSLVWKHYKEGCSVRLLNPQTFNSNVWKLCSTLQTHFQCGVGANIYLTPAGAQGFAPHYDDVDVFILQLEGKKEWRLYKPRDANEVLPKKSSENFTQEEIGEPYFTVTLEAGDLLYFPRGVIHQAVSPSDVHSLHITVSTYLNNTWGDLIGKVLNRALEIANEECLEFREGLPRDYTQYLGVIHSDKVGDERRKELTDKVGTLWDKLGQLLPIDIGADQMAVKYLLDSLPPVLTQLEKKHSIEDETTSMKIKPETRFRLIRADSVRLVVEDIAILFHNADNTRIYHQVGEEPGVVEFTLECVDALEHIIDSYPSYIYTKDLPIEDDDQKLDVVSALYEKGLIMFEK</sequence>
<protein>
    <recommendedName>
        <fullName>Bifunctional lysine-specific demethylase and histidyl-hydroxylase NO66</fullName>
        <ecNumber>1.14.11.-</ecNumber>
        <ecNumber>1.14.11.27</ecNumber>
    </recommendedName>
    <alternativeName>
        <fullName>Histone lysine demethylase NO66</fullName>
    </alternativeName>
    <alternativeName>
        <fullName>JmjC domain-containing protein G</fullName>
    </alternativeName>
</protein>
<keyword id="KW-0156">Chromatin regulator</keyword>
<keyword id="KW-0223">Dioxygenase</keyword>
<keyword id="KW-0408">Iron</keyword>
<keyword id="KW-0479">Metal-binding</keyword>
<keyword id="KW-0539">Nucleus</keyword>
<keyword id="KW-0560">Oxidoreductase</keyword>
<keyword id="KW-1185">Reference proteome</keyword>
<keyword id="KW-0678">Repressor</keyword>
<keyword id="KW-0804">Transcription</keyword>
<keyword id="KW-0805">Transcription regulation</keyword>
<gene>
    <name type="primary">jcdg</name>
    <name type="ORF">DDB_G0287513</name>
</gene>
<proteinExistence type="inferred from homology"/>
<accession>Q54K96</accession>
<name>NO66_DICDI</name>
<dbReference type="EC" id="1.14.11.-"/>
<dbReference type="EC" id="1.14.11.27"/>
<dbReference type="EMBL" id="AAFI02000102">
    <property type="protein sequence ID" value="EAL63656.1"/>
    <property type="molecule type" value="Genomic_DNA"/>
</dbReference>
<dbReference type="RefSeq" id="XP_637159.1">
    <property type="nucleotide sequence ID" value="XM_632067.1"/>
</dbReference>
<dbReference type="SMR" id="Q54K96"/>
<dbReference type="BioGRID" id="1251163">
    <property type="interactions" value="1"/>
</dbReference>
<dbReference type="FunCoup" id="Q54K96">
    <property type="interactions" value="295"/>
</dbReference>
<dbReference type="STRING" id="44689.Q54K96"/>
<dbReference type="PaxDb" id="44689-DDB0233998"/>
<dbReference type="EnsemblProtists" id="EAL63656">
    <property type="protein sequence ID" value="EAL63656"/>
    <property type="gene ID" value="DDB_G0287513"/>
</dbReference>
<dbReference type="GeneID" id="8626160"/>
<dbReference type="KEGG" id="ddi:DDB_G0287513"/>
<dbReference type="dictyBase" id="DDB_G0287513">
    <property type="gene designation" value="jcdG"/>
</dbReference>
<dbReference type="VEuPathDB" id="AmoebaDB:DDB_G0287513"/>
<dbReference type="eggNOG" id="KOG3706">
    <property type="taxonomic scope" value="Eukaryota"/>
</dbReference>
<dbReference type="HOGENOM" id="CLU_013645_4_0_1"/>
<dbReference type="InParanoid" id="Q54K96"/>
<dbReference type="OMA" id="YLEYMGV"/>
<dbReference type="PhylomeDB" id="Q54K96"/>
<dbReference type="Reactome" id="R-DDI-9629569">
    <property type="pathway name" value="Protein hydroxylation"/>
</dbReference>
<dbReference type="PRO" id="PR:Q54K96"/>
<dbReference type="Proteomes" id="UP000002195">
    <property type="component" value="Chromosome 5"/>
</dbReference>
<dbReference type="GO" id="GO:0005730">
    <property type="term" value="C:nucleolus"/>
    <property type="evidence" value="ECO:0000318"/>
    <property type="project" value="GO_Central"/>
</dbReference>
<dbReference type="GO" id="GO:0005634">
    <property type="term" value="C:nucleus"/>
    <property type="evidence" value="ECO:0000250"/>
    <property type="project" value="UniProtKB"/>
</dbReference>
<dbReference type="GO" id="GO:0016706">
    <property type="term" value="F:2-oxoglutarate-dependent dioxygenase activity"/>
    <property type="evidence" value="ECO:0000250"/>
    <property type="project" value="UniProtKB"/>
</dbReference>
<dbReference type="GO" id="GO:0051864">
    <property type="term" value="F:histone H3K36 demethylase activity"/>
    <property type="evidence" value="ECO:0000250"/>
    <property type="project" value="UniProtKB"/>
</dbReference>
<dbReference type="GO" id="GO:0140680">
    <property type="term" value="F:histone H3K36me/H3K36me2 demethylase activity"/>
    <property type="evidence" value="ECO:0007669"/>
    <property type="project" value="UniProtKB-EC"/>
</dbReference>
<dbReference type="GO" id="GO:0032453">
    <property type="term" value="F:histone H3K4 demethylase activity"/>
    <property type="evidence" value="ECO:0000318"/>
    <property type="project" value="GO_Central"/>
</dbReference>
<dbReference type="GO" id="GO:0034647">
    <property type="term" value="F:histone H3K4me/H3K4me2/H3K4me3 demethylase activity"/>
    <property type="evidence" value="ECO:0000250"/>
    <property type="project" value="UniProtKB"/>
</dbReference>
<dbReference type="GO" id="GO:0005506">
    <property type="term" value="F:iron ion binding"/>
    <property type="evidence" value="ECO:0000250"/>
    <property type="project" value="UniProtKB"/>
</dbReference>
<dbReference type="GO" id="GO:0045892">
    <property type="term" value="P:negative regulation of DNA-templated transcription"/>
    <property type="evidence" value="ECO:0000250"/>
    <property type="project" value="UniProtKB"/>
</dbReference>
<dbReference type="FunFam" id="2.60.120.650:FF:000013">
    <property type="entry name" value="Ribosomal oxygenase 1"/>
    <property type="match status" value="1"/>
</dbReference>
<dbReference type="FunFam" id="1.10.10.1500:FF:000001">
    <property type="entry name" value="ribosomal oxygenase 1 isoform X1"/>
    <property type="match status" value="1"/>
</dbReference>
<dbReference type="FunFam" id="3.90.930.40:FF:000001">
    <property type="entry name" value="ribosomal oxygenase 1 isoform X1"/>
    <property type="match status" value="1"/>
</dbReference>
<dbReference type="Gene3D" id="3.90.930.40">
    <property type="match status" value="1"/>
</dbReference>
<dbReference type="Gene3D" id="2.60.120.650">
    <property type="entry name" value="Cupin"/>
    <property type="match status" value="1"/>
</dbReference>
<dbReference type="Gene3D" id="1.10.10.1500">
    <property type="entry name" value="JmjC domain-containing ribosomal oxygenase (ROX), dimer domain"/>
    <property type="match status" value="1"/>
</dbReference>
<dbReference type="InterPro" id="IPR003347">
    <property type="entry name" value="JmjC_dom"/>
</dbReference>
<dbReference type="InterPro" id="IPR039994">
    <property type="entry name" value="NO66-like"/>
</dbReference>
<dbReference type="InterPro" id="IPR049043">
    <property type="entry name" value="RIOX1/NO66-like_C_WH"/>
</dbReference>
<dbReference type="PANTHER" id="PTHR13096">
    <property type="entry name" value="MINA53 MYC INDUCED NUCLEAR ANTIGEN"/>
    <property type="match status" value="1"/>
</dbReference>
<dbReference type="PANTHER" id="PTHR13096:SF8">
    <property type="entry name" value="RIBOSOMAL OXYGENASE 1"/>
    <property type="match status" value="1"/>
</dbReference>
<dbReference type="Pfam" id="PF08007">
    <property type="entry name" value="JmjC_2"/>
    <property type="match status" value="1"/>
</dbReference>
<dbReference type="Pfam" id="PF21233">
    <property type="entry name" value="RIOX1_C_WH"/>
    <property type="match status" value="1"/>
</dbReference>
<dbReference type="SUPFAM" id="SSF51197">
    <property type="entry name" value="Clavaminate synthase-like"/>
    <property type="match status" value="1"/>
</dbReference>
<dbReference type="PROSITE" id="PS51184">
    <property type="entry name" value="JMJC"/>
    <property type="match status" value="1"/>
</dbReference>
<reference key="1">
    <citation type="journal article" date="2005" name="Nature">
        <title>The genome of the social amoeba Dictyostelium discoideum.</title>
        <authorList>
            <person name="Eichinger L."/>
            <person name="Pachebat J.A."/>
            <person name="Gloeckner G."/>
            <person name="Rajandream M.A."/>
            <person name="Sucgang R."/>
            <person name="Berriman M."/>
            <person name="Song J."/>
            <person name="Olsen R."/>
            <person name="Szafranski K."/>
            <person name="Xu Q."/>
            <person name="Tunggal B."/>
            <person name="Kummerfeld S."/>
            <person name="Madera M."/>
            <person name="Konfortov B.A."/>
            <person name="Rivero F."/>
            <person name="Bankier A.T."/>
            <person name="Lehmann R."/>
            <person name="Hamlin N."/>
            <person name="Davies R."/>
            <person name="Gaudet P."/>
            <person name="Fey P."/>
            <person name="Pilcher K."/>
            <person name="Chen G."/>
            <person name="Saunders D."/>
            <person name="Sodergren E.J."/>
            <person name="Davis P."/>
            <person name="Kerhornou A."/>
            <person name="Nie X."/>
            <person name="Hall N."/>
            <person name="Anjard C."/>
            <person name="Hemphill L."/>
            <person name="Bason N."/>
            <person name="Farbrother P."/>
            <person name="Desany B."/>
            <person name="Just E."/>
            <person name="Morio T."/>
            <person name="Rost R."/>
            <person name="Churcher C.M."/>
            <person name="Cooper J."/>
            <person name="Haydock S."/>
            <person name="van Driessche N."/>
            <person name="Cronin A."/>
            <person name="Goodhead I."/>
            <person name="Muzny D.M."/>
            <person name="Mourier T."/>
            <person name="Pain A."/>
            <person name="Lu M."/>
            <person name="Harper D."/>
            <person name="Lindsay R."/>
            <person name="Hauser H."/>
            <person name="James K.D."/>
            <person name="Quiles M."/>
            <person name="Madan Babu M."/>
            <person name="Saito T."/>
            <person name="Buchrieser C."/>
            <person name="Wardroper A."/>
            <person name="Felder M."/>
            <person name="Thangavelu M."/>
            <person name="Johnson D."/>
            <person name="Knights A."/>
            <person name="Loulseged H."/>
            <person name="Mungall K.L."/>
            <person name="Oliver K."/>
            <person name="Price C."/>
            <person name="Quail M.A."/>
            <person name="Urushihara H."/>
            <person name="Hernandez J."/>
            <person name="Rabbinowitsch E."/>
            <person name="Steffen D."/>
            <person name="Sanders M."/>
            <person name="Ma J."/>
            <person name="Kohara Y."/>
            <person name="Sharp S."/>
            <person name="Simmonds M.N."/>
            <person name="Spiegler S."/>
            <person name="Tivey A."/>
            <person name="Sugano S."/>
            <person name="White B."/>
            <person name="Walker D."/>
            <person name="Woodward J.R."/>
            <person name="Winckler T."/>
            <person name="Tanaka Y."/>
            <person name="Shaulsky G."/>
            <person name="Schleicher M."/>
            <person name="Weinstock G.M."/>
            <person name="Rosenthal A."/>
            <person name="Cox E.C."/>
            <person name="Chisholm R.L."/>
            <person name="Gibbs R.A."/>
            <person name="Loomis W.F."/>
            <person name="Platzer M."/>
            <person name="Kay R.R."/>
            <person name="Williams J.G."/>
            <person name="Dear P.H."/>
            <person name="Noegel A.A."/>
            <person name="Barrell B.G."/>
            <person name="Kuspa A."/>
        </authorList>
    </citation>
    <scope>NUCLEOTIDE SEQUENCE [LARGE SCALE GENOMIC DNA]</scope>
    <source>
        <strain>AX4</strain>
    </source>
</reference>
<evidence type="ECO:0000250" key="1"/>
<evidence type="ECO:0000255" key="2">
    <source>
        <dbReference type="PROSITE-ProRule" id="PRU00538"/>
    </source>
</evidence>
<evidence type="ECO:0000256" key="3">
    <source>
        <dbReference type="SAM" id="MobiDB-lite"/>
    </source>
</evidence>
<evidence type="ECO:0000305" key="4"/>
<feature type="chain" id="PRO_0000348220" description="Bifunctional lysine-specific demethylase and histidyl-hydroxylase NO66">
    <location>
        <begin position="1"/>
        <end position="514"/>
    </location>
</feature>
<feature type="domain" description="JmjC" evidence="2">
    <location>
        <begin position="180"/>
        <end position="327"/>
    </location>
</feature>
<feature type="region of interest" description="Disordered" evidence="3">
    <location>
        <begin position="1"/>
        <end position="53"/>
    </location>
</feature>
<feature type="compositionally biased region" description="Acidic residues" evidence="3">
    <location>
        <begin position="7"/>
        <end position="17"/>
    </location>
</feature>
<feature type="compositionally biased region" description="Basic residues" evidence="3">
    <location>
        <begin position="25"/>
        <end position="37"/>
    </location>
</feature>
<feature type="compositionally biased region" description="Polar residues" evidence="3">
    <location>
        <begin position="44"/>
        <end position="53"/>
    </location>
</feature>
<feature type="binding site" evidence="2">
    <location>
        <position position="226"/>
    </location>
    <ligand>
        <name>Fe cation</name>
        <dbReference type="ChEBI" id="CHEBI:24875"/>
        <note>catalytic</note>
    </ligand>
</feature>
<feature type="binding site" evidence="2">
    <location>
        <position position="228"/>
    </location>
    <ligand>
        <name>Fe cation</name>
        <dbReference type="ChEBI" id="CHEBI:24875"/>
        <note>catalytic</note>
    </ligand>
</feature>
<feature type="binding site" evidence="2">
    <location>
        <position position="291"/>
    </location>
    <ligand>
        <name>Fe cation</name>
        <dbReference type="ChEBI" id="CHEBI:24875"/>
        <note>catalytic</note>
    </ligand>
</feature>